<dbReference type="EC" id="1.1.1.23" evidence="1"/>
<dbReference type="EMBL" id="AE017194">
    <property type="protein sequence ID" value="AAS40455.1"/>
    <property type="molecule type" value="Genomic_DNA"/>
</dbReference>
<dbReference type="SMR" id="P62456"/>
<dbReference type="KEGG" id="bca:BCE_1526"/>
<dbReference type="HOGENOM" id="CLU_006732_3_3_9"/>
<dbReference type="UniPathway" id="UPA00031">
    <property type="reaction ID" value="UER00014"/>
</dbReference>
<dbReference type="Proteomes" id="UP000002527">
    <property type="component" value="Chromosome"/>
</dbReference>
<dbReference type="GO" id="GO:0005829">
    <property type="term" value="C:cytosol"/>
    <property type="evidence" value="ECO:0007669"/>
    <property type="project" value="TreeGrafter"/>
</dbReference>
<dbReference type="GO" id="GO:0004399">
    <property type="term" value="F:histidinol dehydrogenase activity"/>
    <property type="evidence" value="ECO:0007669"/>
    <property type="project" value="UniProtKB-UniRule"/>
</dbReference>
<dbReference type="GO" id="GO:0051287">
    <property type="term" value="F:NAD binding"/>
    <property type="evidence" value="ECO:0007669"/>
    <property type="project" value="InterPro"/>
</dbReference>
<dbReference type="GO" id="GO:0008270">
    <property type="term" value="F:zinc ion binding"/>
    <property type="evidence" value="ECO:0007669"/>
    <property type="project" value="UniProtKB-UniRule"/>
</dbReference>
<dbReference type="GO" id="GO:0000105">
    <property type="term" value="P:L-histidine biosynthetic process"/>
    <property type="evidence" value="ECO:0007669"/>
    <property type="project" value="UniProtKB-UniRule"/>
</dbReference>
<dbReference type="CDD" id="cd06572">
    <property type="entry name" value="Histidinol_dh"/>
    <property type="match status" value="1"/>
</dbReference>
<dbReference type="FunFam" id="3.40.50.1980:FF:000001">
    <property type="entry name" value="Histidinol dehydrogenase"/>
    <property type="match status" value="1"/>
</dbReference>
<dbReference type="FunFam" id="3.40.50.1980:FF:000026">
    <property type="entry name" value="Histidinol dehydrogenase"/>
    <property type="match status" value="1"/>
</dbReference>
<dbReference type="FunFam" id="1.20.5.1300:FF:000002">
    <property type="entry name" value="Histidinol dehydrogenase, chloroplastic"/>
    <property type="match status" value="1"/>
</dbReference>
<dbReference type="Gene3D" id="1.20.5.1300">
    <property type="match status" value="1"/>
</dbReference>
<dbReference type="Gene3D" id="3.40.50.1980">
    <property type="entry name" value="Nitrogenase molybdenum iron protein domain"/>
    <property type="match status" value="2"/>
</dbReference>
<dbReference type="HAMAP" id="MF_01024">
    <property type="entry name" value="HisD"/>
    <property type="match status" value="1"/>
</dbReference>
<dbReference type="InterPro" id="IPR016161">
    <property type="entry name" value="Ald_DH/histidinol_DH"/>
</dbReference>
<dbReference type="InterPro" id="IPR001692">
    <property type="entry name" value="Histidinol_DH_CS"/>
</dbReference>
<dbReference type="InterPro" id="IPR022695">
    <property type="entry name" value="Histidinol_DH_monofunct"/>
</dbReference>
<dbReference type="InterPro" id="IPR012131">
    <property type="entry name" value="Hstdl_DH"/>
</dbReference>
<dbReference type="NCBIfam" id="TIGR00069">
    <property type="entry name" value="hisD"/>
    <property type="match status" value="1"/>
</dbReference>
<dbReference type="PANTHER" id="PTHR21256:SF2">
    <property type="entry name" value="HISTIDINE BIOSYNTHESIS TRIFUNCTIONAL PROTEIN"/>
    <property type="match status" value="1"/>
</dbReference>
<dbReference type="PANTHER" id="PTHR21256">
    <property type="entry name" value="HISTIDINOL DEHYDROGENASE HDH"/>
    <property type="match status" value="1"/>
</dbReference>
<dbReference type="Pfam" id="PF00815">
    <property type="entry name" value="Histidinol_dh"/>
    <property type="match status" value="1"/>
</dbReference>
<dbReference type="PIRSF" id="PIRSF000099">
    <property type="entry name" value="Histidinol_dh"/>
    <property type="match status" value="1"/>
</dbReference>
<dbReference type="PRINTS" id="PR00083">
    <property type="entry name" value="HOLDHDRGNASE"/>
</dbReference>
<dbReference type="SUPFAM" id="SSF53720">
    <property type="entry name" value="ALDH-like"/>
    <property type="match status" value="1"/>
</dbReference>
<dbReference type="PROSITE" id="PS00611">
    <property type="entry name" value="HISOL_DEHYDROGENASE"/>
    <property type="match status" value="1"/>
</dbReference>
<organism>
    <name type="scientific">Bacillus cereus (strain ATCC 10987 / NRS 248)</name>
    <dbReference type="NCBI Taxonomy" id="222523"/>
    <lineage>
        <taxon>Bacteria</taxon>
        <taxon>Bacillati</taxon>
        <taxon>Bacillota</taxon>
        <taxon>Bacilli</taxon>
        <taxon>Bacillales</taxon>
        <taxon>Bacillaceae</taxon>
        <taxon>Bacillus</taxon>
        <taxon>Bacillus cereus group</taxon>
    </lineage>
</organism>
<comment type="function">
    <text evidence="1">Catalyzes the sequential NAD-dependent oxidations of L-histidinol to L-histidinaldehyde and then to L-histidine.</text>
</comment>
<comment type="catalytic activity">
    <reaction evidence="1">
        <text>L-histidinol + 2 NAD(+) + H2O = L-histidine + 2 NADH + 3 H(+)</text>
        <dbReference type="Rhea" id="RHEA:20641"/>
        <dbReference type="ChEBI" id="CHEBI:15377"/>
        <dbReference type="ChEBI" id="CHEBI:15378"/>
        <dbReference type="ChEBI" id="CHEBI:57540"/>
        <dbReference type="ChEBI" id="CHEBI:57595"/>
        <dbReference type="ChEBI" id="CHEBI:57699"/>
        <dbReference type="ChEBI" id="CHEBI:57945"/>
        <dbReference type="EC" id="1.1.1.23"/>
    </reaction>
</comment>
<comment type="cofactor">
    <cofactor evidence="1">
        <name>Zn(2+)</name>
        <dbReference type="ChEBI" id="CHEBI:29105"/>
    </cofactor>
    <text evidence="1">Binds 1 zinc ion per subunit.</text>
</comment>
<comment type="pathway">
    <text evidence="1">Amino-acid biosynthesis; L-histidine biosynthesis; L-histidine from 5-phospho-alpha-D-ribose 1-diphosphate: step 9/9.</text>
</comment>
<comment type="similarity">
    <text evidence="1">Belongs to the histidinol dehydrogenase family.</text>
</comment>
<reference key="1">
    <citation type="journal article" date="2004" name="Nucleic Acids Res.">
        <title>The genome sequence of Bacillus cereus ATCC 10987 reveals metabolic adaptations and a large plasmid related to Bacillus anthracis pXO1.</title>
        <authorList>
            <person name="Rasko D.A."/>
            <person name="Ravel J."/>
            <person name="Oekstad O.A."/>
            <person name="Helgason E."/>
            <person name="Cer R.Z."/>
            <person name="Jiang L."/>
            <person name="Shores K.A."/>
            <person name="Fouts D.E."/>
            <person name="Tourasse N.J."/>
            <person name="Angiuoli S.V."/>
            <person name="Kolonay J.F."/>
            <person name="Nelson W.C."/>
            <person name="Kolstoe A.-B."/>
            <person name="Fraser C.M."/>
            <person name="Read T.D."/>
        </authorList>
    </citation>
    <scope>NUCLEOTIDE SEQUENCE [LARGE SCALE GENOMIC DNA]</scope>
    <source>
        <strain>ATCC 10987 / NRS 248</strain>
    </source>
</reference>
<sequence length="429" mass="47360">MEIVFEDFQKALSKIKLLRENANIIEETVQRNVSEIVRNVRESGDEALSFYTKKFDGVKIKEFRVSEEEEKRASMFVENSFLEALQEAKKNIISYHEKQKRQSMFDCASEGIIRGQIIRPLENVGVYVPGGTASYPSSVLMNVLPAKLAGVKKIVMVTPPREGGIDPHILVAASLAGVDEIYTIGGAQAIAALAYGTESIPKVDKIVGPGNLYVALAKREVYGIVNIDMIAGPSEIVVIADETGNAKYIAADLLSQAEHDERATAICITTNIELAKKVEKEIERQLETLPRSEIARESINRNGAIFIVPSIDEALQLSNEIAPEHLELHIKEPMNALAYVKHAGSIFLGPYAPEPLGDYLAGPNHVLPTSGTARFFSPLSVDDFVKKSSFLSYTEEALRDVQHHIVELANKEGLHAHARAIQIRFEEEE</sequence>
<name>HISX_BACC1</name>
<accession>P62456</accession>
<feature type="chain" id="PRO_0000135721" description="Histidinol dehydrogenase">
    <location>
        <begin position="1"/>
        <end position="429"/>
    </location>
</feature>
<feature type="active site" description="Proton acceptor" evidence="1">
    <location>
        <position position="324"/>
    </location>
</feature>
<feature type="active site" description="Proton acceptor" evidence="1">
    <location>
        <position position="325"/>
    </location>
</feature>
<feature type="binding site" evidence="1">
    <location>
        <position position="127"/>
    </location>
    <ligand>
        <name>NAD(+)</name>
        <dbReference type="ChEBI" id="CHEBI:57540"/>
    </ligand>
</feature>
<feature type="binding site" evidence="1">
    <location>
        <position position="188"/>
    </location>
    <ligand>
        <name>NAD(+)</name>
        <dbReference type="ChEBI" id="CHEBI:57540"/>
    </ligand>
</feature>
<feature type="binding site" evidence="1">
    <location>
        <position position="211"/>
    </location>
    <ligand>
        <name>NAD(+)</name>
        <dbReference type="ChEBI" id="CHEBI:57540"/>
    </ligand>
</feature>
<feature type="binding site" evidence="1">
    <location>
        <position position="234"/>
    </location>
    <ligand>
        <name>substrate</name>
    </ligand>
</feature>
<feature type="binding site" evidence="1">
    <location>
        <position position="256"/>
    </location>
    <ligand>
        <name>substrate</name>
    </ligand>
</feature>
<feature type="binding site" evidence="1">
    <location>
        <position position="256"/>
    </location>
    <ligand>
        <name>Zn(2+)</name>
        <dbReference type="ChEBI" id="CHEBI:29105"/>
    </ligand>
</feature>
<feature type="binding site" evidence="1">
    <location>
        <position position="259"/>
    </location>
    <ligand>
        <name>substrate</name>
    </ligand>
</feature>
<feature type="binding site" evidence="1">
    <location>
        <position position="259"/>
    </location>
    <ligand>
        <name>Zn(2+)</name>
        <dbReference type="ChEBI" id="CHEBI:29105"/>
    </ligand>
</feature>
<feature type="binding site" evidence="1">
    <location>
        <position position="325"/>
    </location>
    <ligand>
        <name>substrate</name>
    </ligand>
</feature>
<feature type="binding site" evidence="1">
    <location>
        <position position="358"/>
    </location>
    <ligand>
        <name>substrate</name>
    </ligand>
</feature>
<feature type="binding site" evidence="1">
    <location>
        <position position="358"/>
    </location>
    <ligand>
        <name>Zn(2+)</name>
        <dbReference type="ChEBI" id="CHEBI:29105"/>
    </ligand>
</feature>
<feature type="binding site" evidence="1">
    <location>
        <position position="412"/>
    </location>
    <ligand>
        <name>substrate</name>
    </ligand>
</feature>
<feature type="binding site" evidence="1">
    <location>
        <position position="417"/>
    </location>
    <ligand>
        <name>substrate</name>
    </ligand>
</feature>
<feature type="binding site" evidence="1">
    <location>
        <position position="417"/>
    </location>
    <ligand>
        <name>Zn(2+)</name>
        <dbReference type="ChEBI" id="CHEBI:29105"/>
    </ligand>
</feature>
<protein>
    <recommendedName>
        <fullName evidence="1">Histidinol dehydrogenase</fullName>
        <shortName evidence="1">HDH</shortName>
        <ecNumber evidence="1">1.1.1.23</ecNumber>
    </recommendedName>
</protein>
<evidence type="ECO:0000255" key="1">
    <source>
        <dbReference type="HAMAP-Rule" id="MF_01024"/>
    </source>
</evidence>
<proteinExistence type="inferred from homology"/>
<gene>
    <name evidence="1" type="primary">hisD</name>
    <name type="ordered locus">BCE_1526</name>
</gene>
<keyword id="KW-0028">Amino-acid biosynthesis</keyword>
<keyword id="KW-0368">Histidine biosynthesis</keyword>
<keyword id="KW-0479">Metal-binding</keyword>
<keyword id="KW-0520">NAD</keyword>
<keyword id="KW-0560">Oxidoreductase</keyword>
<keyword id="KW-0862">Zinc</keyword>